<proteinExistence type="uncertain"/>
<accession>O13546</accession>
<reference key="1">
    <citation type="journal article" date="1997" name="Nature">
        <title>The nucleotide sequence of Saccharomyces cerevisiae chromosome XII.</title>
        <authorList>
            <person name="Johnston M."/>
            <person name="Hillier L.W."/>
            <person name="Riles L."/>
            <person name="Albermann K."/>
            <person name="Andre B."/>
            <person name="Ansorge W."/>
            <person name="Benes V."/>
            <person name="Brueckner M."/>
            <person name="Delius H."/>
            <person name="Dubois E."/>
            <person name="Duesterhoeft A."/>
            <person name="Entian K.-D."/>
            <person name="Floeth M."/>
            <person name="Goffeau A."/>
            <person name="Hebling U."/>
            <person name="Heumann K."/>
            <person name="Heuss-Neitzel D."/>
            <person name="Hilbert H."/>
            <person name="Hilger F."/>
            <person name="Kleine K."/>
            <person name="Koetter P."/>
            <person name="Louis E.J."/>
            <person name="Messenguy F."/>
            <person name="Mewes H.-W."/>
            <person name="Miosga T."/>
            <person name="Moestl D."/>
            <person name="Mueller-Auer S."/>
            <person name="Nentwich U."/>
            <person name="Obermaier B."/>
            <person name="Piravandi E."/>
            <person name="Pohl T.M."/>
            <person name="Portetelle D."/>
            <person name="Purnelle B."/>
            <person name="Rechmann S."/>
            <person name="Rieger M."/>
            <person name="Rinke M."/>
            <person name="Rose M."/>
            <person name="Scharfe M."/>
            <person name="Scherens B."/>
            <person name="Scholler P."/>
            <person name="Schwager C."/>
            <person name="Schwarz S."/>
            <person name="Underwood A.P."/>
            <person name="Urrestarazu L.A."/>
            <person name="Vandenbol M."/>
            <person name="Verhasselt P."/>
            <person name="Vierendeels F."/>
            <person name="Voet M."/>
            <person name="Volckaert G."/>
            <person name="Voss H."/>
            <person name="Wambutt R."/>
            <person name="Wedler E."/>
            <person name="Wedler H."/>
            <person name="Zimmermann F.K."/>
            <person name="Zollner A."/>
            <person name="Hani J."/>
            <person name="Hoheisel J.D."/>
        </authorList>
    </citation>
    <scope>NUCLEOTIDE SEQUENCE [LARGE SCALE GENOMIC DNA]</scope>
    <source>
        <strain>ATCC 204508 / S288c</strain>
    </source>
</reference>
<reference key="2">
    <citation type="journal article" date="2014" name="G3 (Bethesda)">
        <title>The reference genome sequence of Saccharomyces cerevisiae: Then and now.</title>
        <authorList>
            <person name="Engel S.R."/>
            <person name="Dietrich F.S."/>
            <person name="Fisk D.G."/>
            <person name="Binkley G."/>
            <person name="Balakrishnan R."/>
            <person name="Costanzo M.C."/>
            <person name="Dwight S.S."/>
            <person name="Hitz B.C."/>
            <person name="Karra K."/>
            <person name="Nash R.S."/>
            <person name="Weng S."/>
            <person name="Wong E.D."/>
            <person name="Lloyd P."/>
            <person name="Skrzypek M.S."/>
            <person name="Miyasato S.R."/>
            <person name="Simison M."/>
            <person name="Cherry J.M."/>
        </authorList>
    </citation>
    <scope>GENOME REANNOTATION</scope>
    <source>
        <strain>ATCC 204508 / S288c</strain>
    </source>
</reference>
<organism>
    <name type="scientific">Saccharomyces cerevisiae (strain ATCC 204508 / S288c)</name>
    <name type="common">Baker's yeast</name>
    <dbReference type="NCBI Taxonomy" id="559292"/>
    <lineage>
        <taxon>Eukaryota</taxon>
        <taxon>Fungi</taxon>
        <taxon>Dikarya</taxon>
        <taxon>Ascomycota</taxon>
        <taxon>Saccharomycotina</taxon>
        <taxon>Saccharomycetes</taxon>
        <taxon>Saccharomycetales</taxon>
        <taxon>Saccharomycetaceae</taxon>
        <taxon>Saccharomyces</taxon>
    </lineage>
</organism>
<evidence type="ECO:0000305" key="1"/>
<evidence type="ECO:0000305" key="2">
    <source>
    </source>
</evidence>
<feature type="chain" id="PRO_0000299624" description="Putative uncharacterized protein YLR232W">
    <location>
        <begin position="1"/>
        <end position="115"/>
    </location>
</feature>
<gene>
    <name type="ordered locus">YLR232W</name>
</gene>
<protein>
    <recommendedName>
        <fullName>Putative uncharacterized protein YLR232W</fullName>
    </recommendedName>
</protein>
<sequence length="115" mass="12234">MGASSGRIGKSMLTQGTFPLASSGCLKCDSTAQSLHASSSALIEFLVDFGIKPKEFPHKYVTGLSSDDSPMDLNVGMLNSSLRDSGYSPSNSKAFSIITSLFLFSTEYLGLICTY</sequence>
<comment type="miscellaneous">
    <text evidence="1">Partially overlaps BNA5.</text>
</comment>
<comment type="caution">
    <text evidence="2">Product of a dubious gene prediction unlikely to encode a functional protein. Because of that it is not part of the S.cerevisiae S288c complete/reference proteome set.</text>
</comment>
<name>YL232_YEAST</name>
<dbReference type="EMBL" id="U19027">
    <property type="protein sequence ID" value="AAB67421.1"/>
    <property type="molecule type" value="Genomic_DNA"/>
</dbReference>
<dbReference type="PIR" id="S69297">
    <property type="entry name" value="S69297"/>
</dbReference>
<dbReference type="SMR" id="O13546"/>
<dbReference type="IntAct" id="O13546">
    <property type="interactions" value="1"/>
</dbReference>
<dbReference type="STRING" id="4932.YLR232W"/>
<dbReference type="PaxDb" id="4932-YLR232W"/>
<dbReference type="EnsemblFungi" id="YLR232W_mRNA">
    <property type="protein sequence ID" value="YLR232W"/>
    <property type="gene ID" value="YLR232W"/>
</dbReference>
<dbReference type="AGR" id="SGD:S000004222"/>
<dbReference type="SGD" id="S000004222">
    <property type="gene designation" value="YLR232W"/>
</dbReference>
<dbReference type="HOGENOM" id="CLU_2199047_0_0_1"/>